<reference key="1">
    <citation type="journal article" date="2009" name="PLoS Genet.">
        <title>Organised genome dynamics in the Escherichia coli species results in highly diverse adaptive paths.</title>
        <authorList>
            <person name="Touchon M."/>
            <person name="Hoede C."/>
            <person name="Tenaillon O."/>
            <person name="Barbe V."/>
            <person name="Baeriswyl S."/>
            <person name="Bidet P."/>
            <person name="Bingen E."/>
            <person name="Bonacorsi S."/>
            <person name="Bouchier C."/>
            <person name="Bouvet O."/>
            <person name="Calteau A."/>
            <person name="Chiapello H."/>
            <person name="Clermont O."/>
            <person name="Cruveiller S."/>
            <person name="Danchin A."/>
            <person name="Diard M."/>
            <person name="Dossat C."/>
            <person name="Karoui M.E."/>
            <person name="Frapy E."/>
            <person name="Garry L."/>
            <person name="Ghigo J.M."/>
            <person name="Gilles A.M."/>
            <person name="Johnson J."/>
            <person name="Le Bouguenec C."/>
            <person name="Lescat M."/>
            <person name="Mangenot S."/>
            <person name="Martinez-Jehanne V."/>
            <person name="Matic I."/>
            <person name="Nassif X."/>
            <person name="Oztas S."/>
            <person name="Petit M.A."/>
            <person name="Pichon C."/>
            <person name="Rouy Z."/>
            <person name="Ruf C.S."/>
            <person name="Schneider D."/>
            <person name="Tourret J."/>
            <person name="Vacherie B."/>
            <person name="Vallenet D."/>
            <person name="Medigue C."/>
            <person name="Rocha E.P.C."/>
            <person name="Denamur E."/>
        </authorList>
    </citation>
    <scope>NUCLEOTIDE SEQUENCE [LARGE SCALE GENOMIC DNA]</scope>
    <source>
        <strain>IAI39 / ExPEC</strain>
    </source>
</reference>
<dbReference type="EC" id="1.8.4.11" evidence="1"/>
<dbReference type="EMBL" id="CU928164">
    <property type="protein sequence ID" value="CAR20788.1"/>
    <property type="molecule type" value="Genomic_DNA"/>
</dbReference>
<dbReference type="RefSeq" id="WP_001305659.1">
    <property type="nucleotide sequence ID" value="NC_011750.1"/>
</dbReference>
<dbReference type="RefSeq" id="YP_002410551.1">
    <property type="nucleotide sequence ID" value="NC_011750.1"/>
</dbReference>
<dbReference type="SMR" id="B7NUD2"/>
<dbReference type="STRING" id="585057.ECIAI39_4690"/>
<dbReference type="KEGG" id="ect:ECIAI39_4690"/>
<dbReference type="PATRIC" id="fig|585057.6.peg.4839"/>
<dbReference type="HOGENOM" id="CLU_031040_10_3_6"/>
<dbReference type="Proteomes" id="UP000000749">
    <property type="component" value="Chromosome"/>
</dbReference>
<dbReference type="GO" id="GO:0005737">
    <property type="term" value="C:cytoplasm"/>
    <property type="evidence" value="ECO:0007669"/>
    <property type="project" value="TreeGrafter"/>
</dbReference>
<dbReference type="GO" id="GO:0036456">
    <property type="term" value="F:L-methionine-(S)-S-oxide reductase activity"/>
    <property type="evidence" value="ECO:0007669"/>
    <property type="project" value="TreeGrafter"/>
</dbReference>
<dbReference type="GO" id="GO:0008113">
    <property type="term" value="F:peptide-methionine (S)-S-oxide reductase activity"/>
    <property type="evidence" value="ECO:0007669"/>
    <property type="project" value="UniProtKB-UniRule"/>
</dbReference>
<dbReference type="GO" id="GO:0034599">
    <property type="term" value="P:cellular response to oxidative stress"/>
    <property type="evidence" value="ECO:0007669"/>
    <property type="project" value="TreeGrafter"/>
</dbReference>
<dbReference type="GO" id="GO:0036211">
    <property type="term" value="P:protein modification process"/>
    <property type="evidence" value="ECO:0007669"/>
    <property type="project" value="UniProtKB-UniRule"/>
</dbReference>
<dbReference type="FunFam" id="3.30.1060.10:FF:000001">
    <property type="entry name" value="Peptide methionine sulfoxide reductase MsrA"/>
    <property type="match status" value="1"/>
</dbReference>
<dbReference type="Gene3D" id="3.30.1060.10">
    <property type="entry name" value="Peptide methionine sulphoxide reductase MsrA"/>
    <property type="match status" value="1"/>
</dbReference>
<dbReference type="HAMAP" id="MF_01401">
    <property type="entry name" value="MsrA"/>
    <property type="match status" value="1"/>
</dbReference>
<dbReference type="InterPro" id="IPR002569">
    <property type="entry name" value="Met_Sox_Rdtase_MsrA_dom"/>
</dbReference>
<dbReference type="InterPro" id="IPR036509">
    <property type="entry name" value="Met_Sox_Rdtase_MsrA_sf"/>
</dbReference>
<dbReference type="InterPro" id="IPR050162">
    <property type="entry name" value="MsrA_MetSO_reductase"/>
</dbReference>
<dbReference type="NCBIfam" id="TIGR00401">
    <property type="entry name" value="msrA"/>
    <property type="match status" value="1"/>
</dbReference>
<dbReference type="PANTHER" id="PTHR42799">
    <property type="entry name" value="MITOCHONDRIAL PEPTIDE METHIONINE SULFOXIDE REDUCTASE"/>
    <property type="match status" value="1"/>
</dbReference>
<dbReference type="PANTHER" id="PTHR42799:SF2">
    <property type="entry name" value="MITOCHONDRIAL PEPTIDE METHIONINE SULFOXIDE REDUCTASE"/>
    <property type="match status" value="1"/>
</dbReference>
<dbReference type="Pfam" id="PF01625">
    <property type="entry name" value="PMSR"/>
    <property type="match status" value="1"/>
</dbReference>
<dbReference type="SUPFAM" id="SSF55068">
    <property type="entry name" value="Peptide methionine sulfoxide reductase"/>
    <property type="match status" value="1"/>
</dbReference>
<keyword id="KW-0560">Oxidoreductase</keyword>
<evidence type="ECO:0000255" key="1">
    <source>
        <dbReference type="HAMAP-Rule" id="MF_01401"/>
    </source>
</evidence>
<protein>
    <recommendedName>
        <fullName evidence="1">Peptide methionine sulfoxide reductase MsrA</fullName>
        <shortName evidence="1">Protein-methionine-S-oxide reductase</shortName>
        <ecNumber evidence="1">1.8.4.11</ecNumber>
    </recommendedName>
    <alternativeName>
        <fullName evidence="1">Peptide-methionine (S)-S-oxide reductase</fullName>
        <shortName evidence="1">Peptide Met(O) reductase</shortName>
    </alternativeName>
</protein>
<name>MSRA_ECO7I</name>
<feature type="chain" id="PRO_1000145401" description="Peptide methionine sulfoxide reductase MsrA">
    <location>
        <begin position="1"/>
        <end position="212"/>
    </location>
</feature>
<feature type="active site" evidence="1">
    <location>
        <position position="52"/>
    </location>
</feature>
<sequence>MSLFDKKHLVSPADALPGRNTPMPVATLHAVNGHSMTNVPDGMEIAIFAMGCFWGVERLFWQLPGVYSTAAGYTGGYTPNPTYREVCSGDTGHAEAVRIVYDPSVISYEQLLQVFWENHDPAQGMRQGNDHGTQYRSAIYPLTPEQDAAARASLERFQAAMLAADDDRRITTEIANATPFYYAEDDHQQYLHKNPYGYCGIGGIGVCLPPEA</sequence>
<gene>
    <name evidence="1" type="primary">msrA</name>
    <name type="ordered locus">ECIAI39_4690</name>
</gene>
<accession>B7NUD2</accession>
<comment type="function">
    <text evidence="1">Has an important function as a repair enzyme for proteins that have been inactivated by oxidation. Catalyzes the reversible oxidation-reduction of methionine sulfoxide in proteins to methionine.</text>
</comment>
<comment type="catalytic activity">
    <reaction evidence="1">
        <text>L-methionyl-[protein] + [thioredoxin]-disulfide + H2O = L-methionyl-(S)-S-oxide-[protein] + [thioredoxin]-dithiol</text>
        <dbReference type="Rhea" id="RHEA:14217"/>
        <dbReference type="Rhea" id="RHEA-COMP:10698"/>
        <dbReference type="Rhea" id="RHEA-COMP:10700"/>
        <dbReference type="Rhea" id="RHEA-COMP:12313"/>
        <dbReference type="Rhea" id="RHEA-COMP:12315"/>
        <dbReference type="ChEBI" id="CHEBI:15377"/>
        <dbReference type="ChEBI" id="CHEBI:16044"/>
        <dbReference type="ChEBI" id="CHEBI:29950"/>
        <dbReference type="ChEBI" id="CHEBI:44120"/>
        <dbReference type="ChEBI" id="CHEBI:50058"/>
        <dbReference type="EC" id="1.8.4.11"/>
    </reaction>
</comment>
<comment type="catalytic activity">
    <reaction evidence="1">
        <text>[thioredoxin]-disulfide + L-methionine + H2O = L-methionine (S)-S-oxide + [thioredoxin]-dithiol</text>
        <dbReference type="Rhea" id="RHEA:19993"/>
        <dbReference type="Rhea" id="RHEA-COMP:10698"/>
        <dbReference type="Rhea" id="RHEA-COMP:10700"/>
        <dbReference type="ChEBI" id="CHEBI:15377"/>
        <dbReference type="ChEBI" id="CHEBI:29950"/>
        <dbReference type="ChEBI" id="CHEBI:50058"/>
        <dbReference type="ChEBI" id="CHEBI:57844"/>
        <dbReference type="ChEBI" id="CHEBI:58772"/>
        <dbReference type="EC" id="1.8.4.11"/>
    </reaction>
</comment>
<comment type="similarity">
    <text evidence="1">Belongs to the MsrA Met sulfoxide reductase family.</text>
</comment>
<proteinExistence type="inferred from homology"/>
<organism>
    <name type="scientific">Escherichia coli O7:K1 (strain IAI39 / ExPEC)</name>
    <dbReference type="NCBI Taxonomy" id="585057"/>
    <lineage>
        <taxon>Bacteria</taxon>
        <taxon>Pseudomonadati</taxon>
        <taxon>Pseudomonadota</taxon>
        <taxon>Gammaproteobacteria</taxon>
        <taxon>Enterobacterales</taxon>
        <taxon>Enterobacteriaceae</taxon>
        <taxon>Escherichia</taxon>
    </lineage>
</organism>